<name>VP3_ROTBS</name>
<comment type="function">
    <text evidence="1">Multifunctional enzyme involved in mRNA capping. Catalyzes the formation of the 5' cap structure on the viral plus-strand transcripts. Specifically binds to GTP and displays guanylyltransferase and methyltransferase activities. Has affinity for ssRNA but not for dsRNA. Capping activity is non-specific and caps RNAs that initiate with either a G or an A residue. Together with VP1 polymerase, forms a VP1-VP3 complex positioned near the channels situated at each of the five-fold vertices of the core. Following infection, the outermost layer of the virus is lost, leaving a double-layered particle (DLP) made up of the core and VP6 shell. VP1 then catalyzes the transcription of fully conservative plus-strand genomic RNAs that are capped by VP3 and extruded through the DLP's channels into the cytoplasm where they function as mRNAs for translation of viral proteins. DLPs probably have an RNA triphosphatase activity as well, whereas open cores do not.</text>
</comment>
<comment type="catalytic activity">
    <reaction evidence="1">
        <text>a 5'-end diphospho-ribonucleoside in mRNA + GTP + H(+) = a 5'-end (5'-triphosphoguanosine)-ribonucleoside in mRNA + diphosphate</text>
        <dbReference type="Rhea" id="RHEA:67012"/>
        <dbReference type="Rhea" id="RHEA-COMP:17165"/>
        <dbReference type="Rhea" id="RHEA-COMP:17166"/>
        <dbReference type="ChEBI" id="CHEBI:15378"/>
        <dbReference type="ChEBI" id="CHEBI:33019"/>
        <dbReference type="ChEBI" id="CHEBI:37565"/>
        <dbReference type="ChEBI" id="CHEBI:167616"/>
        <dbReference type="ChEBI" id="CHEBI:167617"/>
        <dbReference type="EC" id="2.7.7.50"/>
    </reaction>
</comment>
<comment type="catalytic activity">
    <reaction evidence="1">
        <text>a 5'-end (5'-triphosphoguanosine)-ribonucleoside in mRNA + S-adenosyl-L-methionine = a 5'-end (N(7)-methyl 5'-triphosphoguanosine)-ribonucleoside in mRNA + S-adenosyl-L-homocysteine</text>
        <dbReference type="Rhea" id="RHEA:67008"/>
        <dbReference type="Rhea" id="RHEA-COMP:17166"/>
        <dbReference type="Rhea" id="RHEA-COMP:17167"/>
        <dbReference type="ChEBI" id="CHEBI:57856"/>
        <dbReference type="ChEBI" id="CHEBI:59789"/>
        <dbReference type="ChEBI" id="CHEBI:156461"/>
        <dbReference type="ChEBI" id="CHEBI:167617"/>
        <dbReference type="EC" id="2.1.1.56"/>
    </reaction>
</comment>
<comment type="subunit">
    <text evidence="1">Interacts with VP1. Interacts with VP2.</text>
</comment>
<comment type="subcellular location">
    <subcellularLocation>
        <location evidence="1">Virion</location>
    </subcellularLocation>
    <text evidence="1">Attached inside the inner capsid as a minor component. There are about 11 to 12 copies per virion.</text>
</comment>
<comment type="similarity">
    <text evidence="1">Belongs to the rotavirus VP3 family.</text>
</comment>
<protein>
    <recommendedName>
        <fullName evidence="1">Protein VP3</fullName>
    </recommendedName>
    <domain>
        <recommendedName>
            <fullName evidence="1">mRNA guanylyltransferase</fullName>
            <ecNumber evidence="1">2.7.7.50</ecNumber>
        </recommendedName>
    </domain>
    <domain>
        <recommendedName>
            <fullName evidence="1">mRNA (guanine-N(7))-methyltransferase</fullName>
            <ecNumber evidence="1">2.1.1.56</ecNumber>
        </recommendedName>
    </domain>
</protein>
<sequence>MRVLGLFERGNNLNFADTYVYTWNKQYSFHENAFLISNQVATTIIIYLDKEIVNQVNEAFNLLNSNGIPALIIKSDHIGIFTSSNFTYDWQNKIIYFHEYTYYKNNEFIVSDEFWLNTSIQDLLPYKVLFFERGLRKLYEGEEYILYNTATDDDIIYKYIYEKDVIMSGNDYSKLYDTKSFKNFVHFMRLLRMRFAVPFDQLSNRVTRSRAFAKSKIHIGLRNESIPQALDNIHHYWINYSANGMRVSELKGSGSYSEKKISEFDIGQFKNYMNFLTLMFYIKNMKKKPSCTIIGAAPGYWIPSMKKYFNIVTYDDKHVDSTEHYNRYFTDDDIASVKTNGVYIDVRSDFKNYDWKKRRQLVEEETMRWLSITYKLLENRYVEAVLLKMTAMDIEIPDGYFVHFPTTYRKSEYYLLVDKQTVKRPKIKITKSLAYGAINTIFSDNVFISGKYSLKGKTEGVLALYCLSNTINPKEKVVQYANSFSGTCMTVRLNNTYILNKIIDFKTNADYTFLPSDFQCSIKTVLTSYRGYAGVFGYAITKDLKSDGNNHIYIIPNARDDDNFDTFASHLGLSRYSHSKRFSESATTMSGYLFRDMVSGKENMEDTDTENLASGHVFNAIAHYRFDYTYDIVGWLKLHKMRKFRVKSNIYGEHTDDEIRNAIEAAYVYYLLDGDEVGKEYAKRIMEIWDVQTWG</sequence>
<keyword id="KW-0342">GTP-binding</keyword>
<keyword id="KW-0945">Host-virus interaction</keyword>
<keyword id="KW-0489">Methyltransferase</keyword>
<keyword id="KW-0506">mRNA capping</keyword>
<keyword id="KW-0507">mRNA processing</keyword>
<keyword id="KW-0511">Multifunctional enzyme</keyword>
<keyword id="KW-0547">Nucleotide-binding</keyword>
<keyword id="KW-0548">Nucleotidyltransferase</keyword>
<keyword id="KW-0694">RNA-binding</keyword>
<keyword id="KW-0949">S-adenosyl-L-methionine</keyword>
<keyword id="KW-0808">Transferase</keyword>
<keyword id="KW-0899">Viral immunoevasion</keyword>
<keyword id="KW-0946">Virion</keyword>
<accession>Q65526</accession>
<organism>
    <name type="scientific">Rotavirus C (isolate RVC/Cow/Japan/Shintoku/1991/G2P[3])</name>
    <name type="common">RV-C</name>
    <dbReference type="NCBI Taxonomy" id="33723"/>
    <lineage>
        <taxon>Viruses</taxon>
        <taxon>Riboviria</taxon>
        <taxon>Orthornavirae</taxon>
        <taxon>Duplornaviricota</taxon>
        <taxon>Resentoviricetes</taxon>
        <taxon>Reovirales</taxon>
        <taxon>Sedoreoviridae</taxon>
        <taxon>Rotavirus</taxon>
        <taxon>Rotavirus C</taxon>
    </lineage>
</organism>
<evidence type="ECO:0000255" key="1">
    <source>
        <dbReference type="HAMAP-Rule" id="MF_04124"/>
    </source>
</evidence>
<reference key="1">
    <citation type="submission" date="1995-05" db="EMBL/GenBank/DDBJ databases">
        <title>Sequence analysis of VP3 and VP4 genes of a bovine group C rotavirus: molecular evidence for a new P type.</title>
        <authorList>
            <person name="Jiang B."/>
            <person name="Gentsch J.R."/>
            <person name="Tsunemitsu H."/>
            <person name="Saif L.J."/>
            <person name="Glass R.I."/>
        </authorList>
    </citation>
    <scope>NUCLEOTIDE SEQUENCE [GENOMIC DNA]</scope>
</reference>
<proteinExistence type="inferred from homology"/>
<dbReference type="EC" id="2.7.7.50" evidence="1"/>
<dbReference type="EC" id="2.1.1.56" evidence="1"/>
<dbReference type="EMBL" id="U26552">
    <property type="protein sequence ID" value="AAB01673.1"/>
    <property type="molecule type" value="Genomic_DNA"/>
</dbReference>
<dbReference type="SMR" id="Q65526"/>
<dbReference type="GO" id="GO:0019013">
    <property type="term" value="C:viral nucleocapsid"/>
    <property type="evidence" value="ECO:0007669"/>
    <property type="project" value="UniProtKB-UniRule"/>
</dbReference>
<dbReference type="GO" id="GO:0005525">
    <property type="term" value="F:GTP binding"/>
    <property type="evidence" value="ECO:0007669"/>
    <property type="project" value="UniProtKB-UniRule"/>
</dbReference>
<dbReference type="GO" id="GO:0004482">
    <property type="term" value="F:mRNA 5'-cap (guanine-N7-)-methyltransferase activity"/>
    <property type="evidence" value="ECO:0007669"/>
    <property type="project" value="UniProtKB-UniRule"/>
</dbReference>
<dbReference type="GO" id="GO:0004484">
    <property type="term" value="F:mRNA guanylyltransferase activity"/>
    <property type="evidence" value="ECO:0007669"/>
    <property type="project" value="UniProtKB-UniRule"/>
</dbReference>
<dbReference type="GO" id="GO:0003723">
    <property type="term" value="F:RNA binding"/>
    <property type="evidence" value="ECO:0007669"/>
    <property type="project" value="UniProtKB-UniRule"/>
</dbReference>
<dbReference type="GO" id="GO:0016032">
    <property type="term" value="P:viral process"/>
    <property type="evidence" value="ECO:0007669"/>
    <property type="project" value="UniProtKB-UniRule"/>
</dbReference>
<dbReference type="CDD" id="cd20757">
    <property type="entry name" value="capping_2-OMTase_Rotavirus"/>
    <property type="match status" value="1"/>
</dbReference>
<dbReference type="HAMAP" id="MF_04124">
    <property type="entry name" value="Rota_VP3"/>
    <property type="match status" value="1"/>
</dbReference>
<dbReference type="InterPro" id="IPR011181">
    <property type="entry name" value="VP3_Rotav"/>
</dbReference>
<dbReference type="Pfam" id="PF06929">
    <property type="entry name" value="Rotavirus_VP3"/>
    <property type="match status" value="1"/>
</dbReference>
<dbReference type="PIRSF" id="PIRSF004015">
    <property type="entry name" value="LigT_rotavirus"/>
    <property type="match status" value="1"/>
</dbReference>
<dbReference type="PROSITE" id="PS51589">
    <property type="entry name" value="SAM_MT56_VP3"/>
    <property type="match status" value="1"/>
</dbReference>
<feature type="chain" id="PRO_0000369871" description="Protein VP3">
    <location>
        <begin position="1"/>
        <end position="695"/>
    </location>
</feature>
<feature type="region of interest" description="N7-methyltransferase activity" evidence="1">
    <location>
        <begin position="187"/>
        <end position="255"/>
    </location>
</feature>
<feature type="region of interest" description="2'-O-methyltransferase activity" evidence="1">
    <location>
        <begin position="256"/>
        <end position="432"/>
    </location>
</feature>
<feature type="region of interest" description="N7-methyltransferase activity" evidence="1">
    <location>
        <begin position="433"/>
        <end position="559"/>
    </location>
</feature>
<feature type="region of interest" description="GTase/RTPase activity" evidence="1">
    <location>
        <begin position="560"/>
        <end position="695"/>
    </location>
</feature>
<organismHost>
    <name type="scientific">Bos taurus</name>
    <name type="common">Bovine</name>
    <dbReference type="NCBI Taxonomy" id="9913"/>
</organismHost>